<evidence type="ECO:0000250" key="1">
    <source>
        <dbReference type="UniProtKB" id="Q86TI2"/>
    </source>
</evidence>
<evidence type="ECO:0000269" key="2">
    <source>
    </source>
</evidence>
<evidence type="ECO:0000269" key="3">
    <source>
    </source>
</evidence>
<evidence type="ECO:0000269" key="4">
    <source>
    </source>
</evidence>
<evidence type="ECO:0000269" key="5">
    <source>
    </source>
</evidence>
<evidence type="ECO:0000269" key="6">
    <source>
    </source>
</evidence>
<evidence type="ECO:0000269" key="7">
    <source>
    </source>
</evidence>
<evidence type="ECO:0000269" key="8">
    <source>
    </source>
</evidence>
<evidence type="ECO:0000269" key="9">
    <source>
    </source>
</evidence>
<evidence type="ECO:0000269" key="10">
    <source>
    </source>
</evidence>
<evidence type="ECO:0000269" key="11">
    <source>
    </source>
</evidence>
<evidence type="ECO:0000269" key="12">
    <source>
    </source>
</evidence>
<evidence type="ECO:0000269" key="13">
    <source>
    </source>
</evidence>
<evidence type="ECO:0000269" key="14">
    <source>
    </source>
</evidence>
<evidence type="ECO:0000303" key="15">
    <source>
    </source>
</evidence>
<evidence type="ECO:0000303" key="16">
    <source>
    </source>
</evidence>
<evidence type="ECO:0000303" key="17">
    <source>
    </source>
</evidence>
<evidence type="ECO:0000303" key="18">
    <source>
    </source>
</evidence>
<evidence type="ECO:0000303" key="19">
    <source>
    </source>
</evidence>
<evidence type="ECO:0000305" key="20"/>
<evidence type="ECO:0000305" key="21">
    <source>
    </source>
</evidence>
<evidence type="ECO:0000305" key="22">
    <source>
    </source>
</evidence>
<evidence type="ECO:0000312" key="23">
    <source>
        <dbReference type="HGNC" id="HGNC:16490"/>
    </source>
</evidence>
<evidence type="ECO:0007744" key="24">
    <source>
        <dbReference type="PDB" id="6EOO"/>
    </source>
</evidence>
<evidence type="ECO:0007744" key="25">
    <source>
        <dbReference type="PDB" id="6EOP"/>
    </source>
</evidence>
<evidence type="ECO:0007744" key="26">
    <source>
        <dbReference type="PDB" id="6EOS"/>
    </source>
</evidence>
<evidence type="ECO:0007744" key="27">
    <source>
        <dbReference type="PDB" id="6EOT"/>
    </source>
</evidence>
<evidence type="ECO:0007829" key="28">
    <source>
        <dbReference type="PDB" id="6EOP"/>
    </source>
</evidence>
<evidence type="ECO:0007829" key="29">
    <source>
        <dbReference type="PDB" id="6EOT"/>
    </source>
</evidence>
<evidence type="ECO:0007829" key="30">
    <source>
        <dbReference type="PDB" id="6TRW"/>
    </source>
</evidence>
<evidence type="ECO:0007829" key="31">
    <source>
        <dbReference type="PDB" id="7A3L"/>
    </source>
</evidence>
<evidence type="ECO:0007829" key="32">
    <source>
        <dbReference type="PDB" id="7AYQ"/>
    </source>
</evidence>
<evidence type="ECO:0007829" key="33">
    <source>
        <dbReference type="PDB" id="7OR4"/>
    </source>
</evidence>
<evidence type="ECO:0007829" key="34">
    <source>
        <dbReference type="PDB" id="7OZ7"/>
    </source>
</evidence>
<protein>
    <recommendedName>
        <fullName evidence="15">Dipeptidyl peptidase 8</fullName>
        <shortName evidence="16">DP8</shortName>
        <ecNumber evidence="2 3 4 5 6 9">3.4.14.5</ecNumber>
    </recommendedName>
    <alternativeName>
        <fullName>Dipeptidyl peptidase IV-related protein 1</fullName>
        <shortName>DPRP-1</shortName>
    </alternativeName>
    <alternativeName>
        <fullName>Dipeptidyl peptidase VIII</fullName>
        <shortName>DPP VIII</shortName>
    </alternativeName>
    <alternativeName>
        <fullName>Prolyl dipeptidase DPP8</fullName>
    </alternativeName>
</protein>
<comment type="function">
    <text evidence="1 2 3 4 5 6 7 8 10 11 12 13 14 22">Dipeptidyl peptidase that cleaves off N-terminal dipeptides from proteins having a Pro or Ala residue at position 2 (PubMed:11012666, PubMed:12534281, PubMed:12662155, PubMed:15039077, PubMed:15664838, PubMed:20536396, PubMed:29382749). Acts as a key inhibitor of caspase-1-dependent monocyte and macrophage pyroptosis in resting cells by preventing activation of NLRP1 and CARD8 (PubMed:27820798, PubMed:29967349, PubMed:32796818). Sequesters the cleaved C-terminal part of NLRP1 and CARD8, which respectively constitute the active part of the NLRP1 and CARD8 inflammasomes, in a ternary complex, thereby preventing their oligomerization and activation (PubMed:33731929, PubMed:33731932, PubMed:34019797). The dipeptidyl peptidase activity is required to suppress NLRP1 and CARD8; however, neither NLRP1 nor CARD8 are bona fide substrates of DPP8, suggesting the existence of substrate(s) required for NLRP1 and CARD8 inhibition (By similarity).</text>
</comment>
<comment type="catalytic activity">
    <reaction evidence="2 3 4 5 6 7 9">
        <text>Release of an N-terminal dipeptide, Xaa-Yaa-|-Zaa-, from a polypeptide, preferentially when Yaa is Pro, provided Zaa is neither Pro nor hydroxyproline.</text>
        <dbReference type="EC" id="3.4.14.5"/>
    </reaction>
</comment>
<comment type="activity regulation">
    <text evidence="1 2 4 6 8 10 11">Inhibited by zinc. Inhibited by the serine proteinase inhibitor 4-(2-aminoethyl)benzenesulphonyl fluoride (AEBSF), and by di-isopropylfluorophosphate. Specifically inhibited by isoindoline derivatives (PubMed:11012666, PubMed:12662155, PubMed:15664838). Inhibited by Val-boroPro (Talabostat, PT-100), a non-selective inhibitor, which triggers pyroptosis in monocytes and macrophages (PubMed:27820798, PubMed:29967349, PubMed:32796818).</text>
</comment>
<comment type="biophysicochemical properties">
    <kinetics>
        <KM evidence="3 4 5">208 uM for Ala-Pro-AMC</KM>
        <KM evidence="3 4 5">130 uM for Ala-Pro-AFC</KM>
        <KM evidence="3 4 5">120 uM for H-Ala-Pro-pNa</KM>
        <KM evidence="3 4 5">1420 uM for H-Ala-Ala-pNa</KM>
        <KM evidence="3 4 5">310 uM for H-Arg-Pro-pNa</KM>
        <KM evidence="3 4 5">2050 uM for H-Asp-Pro-pNa</KM>
        <KM evidence="3 4 5">480 uM for H-Gly-Pro-pNa</KM>
    </kinetics>
    <phDependence>
        <text evidence="3 4 5">Optimum pH is 7.4-8.5. Little activity below pH 6.5.</text>
    </phDependence>
</comment>
<comment type="subunit">
    <text evidence="1 7 22">Homodimer (PubMed:20536396, PubMed:29382749). Forms a ternary complex with NLRP1, composed of a DPP8 homodimer, one full-length NLRP1 protein, and one cleaved C-terminus of NLRP1 (NACHT, LRR and PYD domains-containing protein 1, C-terminus) (By similarity). Forms a ternary complex with CARD8, composed of a DPP8 homodimer, one full-length NLRP1 protein, and one cleaved C-terminus of CARD8 (Caspase recruitment domain-containing protein 8, C-terminus) (By similarity). In the ternary complex, only one subunit of the DPP8 homodimer is bound to NLRP1 or CARD8 (By similarity).</text>
</comment>
<comment type="subcellular location">
    <subcellularLocation>
        <location evidence="2 3 4">Cytoplasm</location>
    </subcellularLocation>
</comment>
<comment type="alternative products">
    <event type="alternative splicing"/>
    <isoform>
        <id>Q6V1X1-1</id>
        <name>1</name>
        <sequence type="displayed"/>
    </isoform>
    <isoform>
        <id>Q6V1X1-2</id>
        <name>2</name>
        <sequence type="described" ref="VSP_013864"/>
    </isoform>
    <isoform>
        <id>Q6V1X1-3</id>
        <name>3</name>
        <sequence type="described" ref="VSP_013860"/>
    </isoform>
    <isoform>
        <id>Q6V1X1-4</id>
        <name>4</name>
        <sequence type="described" ref="VSP_013860 VSP_013862"/>
    </isoform>
    <isoform>
        <id>Q6V1X1-5</id>
        <name>5</name>
        <sequence type="described" ref="VSP_013863"/>
    </isoform>
    <isoform>
        <id>Q6V1X1-6</id>
        <name>6</name>
        <sequence type="described" ref="VSP_013861"/>
    </isoform>
</comment>
<comment type="tissue specificity">
    <text evidence="2 4">Ubiquitously expressed, with highest levels in testis, placenta, prostate, muscle and brain.</text>
</comment>
<comment type="induction">
    <text evidence="2">In activated T-cells.</text>
</comment>
<comment type="similarity">
    <text evidence="20">Belongs to the peptidase S9B family. DPPIV subfamily.</text>
</comment>
<comment type="sequence caution" evidence="20">
    <conflict type="frameshift">
        <sequence resource="EMBL-CDS" id="AAQ13623"/>
    </conflict>
</comment>
<comment type="sequence caution" evidence="20">
    <conflict type="frameshift">
        <sequence resource="EMBL-CDS" id="AAQ13650"/>
    </conflict>
</comment>
<comment type="sequence caution" evidence="20">
    <conflict type="erroneous initiation">
        <sequence resource="EMBL-CDS" id="AAQ13657"/>
    </conflict>
</comment>
<comment type="sequence caution" evidence="20">
    <conflict type="frameshift">
        <sequence resource="EMBL-CDS" id="BAA91059"/>
    </conflict>
</comment>
<comment type="sequence caution" evidence="20">
    <conflict type="erroneous initiation">
        <sequence resource="EMBL-CDS" id="BAB55395"/>
    </conflict>
</comment>
<accession>Q6V1X1</accession>
<accession>Q7Z4C8</accession>
<accession>Q7Z4D3</accession>
<accession>Q7Z4E1</accession>
<accession>Q8IWG7</accession>
<accession>Q8NEM5</accession>
<accession>Q96JX1</accession>
<accession>Q9HBM2</accession>
<accession>Q9HBM3</accession>
<accession>Q9HBM4</accession>
<accession>Q9HBM5</accession>
<accession>Q9NXF4</accession>
<keyword id="KW-0002">3D-structure</keyword>
<keyword id="KW-0025">Alternative splicing</keyword>
<keyword id="KW-0031">Aminopeptidase</keyword>
<keyword id="KW-0053">Apoptosis</keyword>
<keyword id="KW-0963">Cytoplasm</keyword>
<keyword id="KW-0378">Hydrolase</keyword>
<keyword id="KW-0645">Protease</keyword>
<keyword id="KW-1267">Proteomics identification</keyword>
<keyword id="KW-1185">Reference proteome</keyword>
<keyword id="KW-0720">Serine protease</keyword>
<dbReference type="EC" id="3.4.14.5" evidence="2 3 4 5 6 9"/>
<dbReference type="EMBL" id="AF221634">
    <property type="protein sequence ID" value="AAG29766.1"/>
    <property type="molecule type" value="mRNA"/>
</dbReference>
<dbReference type="EMBL" id="AF221635">
    <property type="protein sequence ID" value="AAG29767.1"/>
    <property type="molecule type" value="mRNA"/>
</dbReference>
<dbReference type="EMBL" id="AF221636">
    <property type="protein sequence ID" value="AAG29768.1"/>
    <property type="molecule type" value="mRNA"/>
</dbReference>
<dbReference type="EMBL" id="AF221637">
    <property type="protein sequence ID" value="AAG29769.1"/>
    <property type="molecule type" value="mRNA"/>
</dbReference>
<dbReference type="EMBL" id="AY172659">
    <property type="protein sequence ID" value="AAO17261.1"/>
    <property type="molecule type" value="mRNA"/>
</dbReference>
<dbReference type="EMBL" id="AY354202">
    <property type="protein sequence ID" value="AAQ63887.1"/>
    <property type="molecule type" value="mRNA"/>
</dbReference>
<dbReference type="EMBL" id="AK000290">
    <property type="protein sequence ID" value="BAA91059.1"/>
    <property type="status" value="ALT_FRAME"/>
    <property type="molecule type" value="mRNA"/>
</dbReference>
<dbReference type="EMBL" id="AK027826">
    <property type="protein sequence ID" value="BAB55395.1"/>
    <property type="status" value="ALT_INIT"/>
    <property type="molecule type" value="mRNA"/>
</dbReference>
<dbReference type="EMBL" id="BC030688">
    <property type="protein sequence ID" value="AAH30688.3"/>
    <property type="molecule type" value="mRNA"/>
</dbReference>
<dbReference type="EMBL" id="BC040203">
    <property type="status" value="NOT_ANNOTATED_CDS"/>
    <property type="molecule type" value="mRNA"/>
</dbReference>
<dbReference type="EMBL" id="AF176779">
    <property type="protein sequence ID" value="AAQ13657.1"/>
    <property type="status" value="ALT_INIT"/>
    <property type="molecule type" value="mRNA"/>
</dbReference>
<dbReference type="EMBL" id="AF175225">
    <property type="protein sequence ID" value="AAQ13650.1"/>
    <property type="status" value="ALT_FRAME"/>
    <property type="molecule type" value="mRNA"/>
</dbReference>
<dbReference type="EMBL" id="AF173382">
    <property type="protein sequence ID" value="AAQ13623.1"/>
    <property type="status" value="ALT_FRAME"/>
    <property type="molecule type" value="mRNA"/>
</dbReference>
<dbReference type="CCDS" id="CCDS10207.1">
    <molecule id="Q6V1X1-1"/>
</dbReference>
<dbReference type="CCDS" id="CCDS10208.1">
    <molecule id="Q6V1X1-2"/>
</dbReference>
<dbReference type="CCDS" id="CCDS10209.1">
    <molecule id="Q6V1X1-4"/>
</dbReference>
<dbReference type="CCDS" id="CCDS10210.1">
    <molecule id="Q6V1X1-3"/>
</dbReference>
<dbReference type="RefSeq" id="NP_001307804.1">
    <molecule id="Q6V1X1-1"/>
    <property type="nucleotide sequence ID" value="NM_001320875.2"/>
</dbReference>
<dbReference type="RefSeq" id="NP_001307805.1">
    <molecule id="Q6V1X1-3"/>
    <property type="nucleotide sequence ID" value="NM_001320876.2"/>
</dbReference>
<dbReference type="RefSeq" id="NP_060213.2">
    <molecule id="Q6V1X1-4"/>
    <property type="nucleotide sequence ID" value="NM_017743.5"/>
</dbReference>
<dbReference type="RefSeq" id="NP_569118.1">
    <molecule id="Q6V1X1-3"/>
    <property type="nucleotide sequence ID" value="NM_130434.5"/>
</dbReference>
<dbReference type="RefSeq" id="NP_932064.1">
    <molecule id="Q6V1X1-1"/>
    <property type="nucleotide sequence ID" value="NM_197960.4"/>
</dbReference>
<dbReference type="RefSeq" id="NP_932065.1">
    <molecule id="Q6V1X1-2"/>
    <property type="nucleotide sequence ID" value="NM_197961.4"/>
</dbReference>
<dbReference type="RefSeq" id="XP_016877862.1">
    <property type="nucleotide sequence ID" value="XM_017022373.1"/>
</dbReference>
<dbReference type="RefSeq" id="XP_016877863.1">
    <property type="nucleotide sequence ID" value="XM_017022374.1"/>
</dbReference>
<dbReference type="RefSeq" id="XP_047288712.1">
    <molecule id="Q6V1X1-1"/>
    <property type="nucleotide sequence ID" value="XM_047432756.1"/>
</dbReference>
<dbReference type="RefSeq" id="XP_047288713.1">
    <molecule id="Q6V1X1-1"/>
    <property type="nucleotide sequence ID" value="XM_047432757.1"/>
</dbReference>
<dbReference type="RefSeq" id="XP_054234271.1">
    <molecule id="Q6V1X1-1"/>
    <property type="nucleotide sequence ID" value="XM_054378296.1"/>
</dbReference>
<dbReference type="RefSeq" id="XP_054234272.1">
    <molecule id="Q6V1X1-1"/>
    <property type="nucleotide sequence ID" value="XM_054378297.1"/>
</dbReference>
<dbReference type="PDB" id="6EOO">
    <property type="method" value="X-ray"/>
    <property type="resolution" value="2.50 A"/>
    <property type="chains" value="A/B/C=1-898"/>
</dbReference>
<dbReference type="PDB" id="6EOP">
    <property type="method" value="X-ray"/>
    <property type="resolution" value="2.40 A"/>
    <property type="chains" value="A/B/C=1-898"/>
</dbReference>
<dbReference type="PDB" id="6EOS">
    <property type="method" value="X-ray"/>
    <property type="resolution" value="3.10 A"/>
    <property type="chains" value="A/B/C/D/E/F=1-898"/>
</dbReference>
<dbReference type="PDB" id="6EOT">
    <property type="method" value="X-ray"/>
    <property type="resolution" value="3.50 A"/>
    <property type="chains" value="A/B/D/G/I/K=1-898"/>
</dbReference>
<dbReference type="PDB" id="6HP8">
    <property type="method" value="X-ray"/>
    <property type="resolution" value="2.50 A"/>
    <property type="chains" value="A/B/C=1-898"/>
</dbReference>
<dbReference type="PDB" id="6QZW">
    <property type="method" value="X-ray"/>
    <property type="resolution" value="3.20 A"/>
    <property type="chains" value="A/B/C=1-898"/>
</dbReference>
<dbReference type="PDB" id="6TRW">
    <property type="method" value="X-ray"/>
    <property type="resolution" value="3.00 A"/>
    <property type="chains" value="A/B/C=1-898"/>
</dbReference>
<dbReference type="PDB" id="6TRX">
    <property type="method" value="X-ray"/>
    <property type="resolution" value="3.20 A"/>
    <property type="chains" value="A/B/C=1-898"/>
</dbReference>
<dbReference type="PDB" id="7A3G">
    <property type="method" value="X-ray"/>
    <property type="resolution" value="2.80 A"/>
    <property type="chains" value="A/B=1-898"/>
</dbReference>
<dbReference type="PDB" id="7A3I">
    <property type="method" value="X-ray"/>
    <property type="resolution" value="2.80 A"/>
    <property type="chains" value="A/B/C=1-898"/>
</dbReference>
<dbReference type="PDB" id="7A3J">
    <property type="method" value="X-ray"/>
    <property type="resolution" value="3.00 A"/>
    <property type="chains" value="A/B/C=1-898"/>
</dbReference>
<dbReference type="PDB" id="7A3K">
    <property type="method" value="X-ray"/>
    <property type="resolution" value="2.65 A"/>
    <property type="chains" value="A/B/C=1-898"/>
</dbReference>
<dbReference type="PDB" id="7A3L">
    <property type="method" value="X-ray"/>
    <property type="resolution" value="2.80 A"/>
    <property type="chains" value="A/B/C=1-898"/>
</dbReference>
<dbReference type="PDB" id="7AYQ">
    <property type="method" value="X-ray"/>
    <property type="resolution" value="2.45 A"/>
    <property type="chains" value="A/B=1-898"/>
</dbReference>
<dbReference type="PDB" id="7AYR">
    <property type="method" value="X-ray"/>
    <property type="resolution" value="2.69 A"/>
    <property type="chains" value="A/B=1-898"/>
</dbReference>
<dbReference type="PDB" id="7OR4">
    <property type="method" value="X-ray"/>
    <property type="resolution" value="2.44 A"/>
    <property type="chains" value="A/B=1-898"/>
</dbReference>
<dbReference type="PDB" id="7OZ7">
    <property type="method" value="X-ray"/>
    <property type="resolution" value="2.60 A"/>
    <property type="chains" value="A/B=1-898"/>
</dbReference>
<dbReference type="PDB" id="7SVM">
    <property type="method" value="X-ray"/>
    <property type="resolution" value="2.69 A"/>
    <property type="chains" value="A/B/C=1-898"/>
</dbReference>
<dbReference type="PDB" id="7SVO">
    <property type="method" value="X-ray"/>
    <property type="resolution" value="2.58 A"/>
    <property type="chains" value="A/B/C=1-898"/>
</dbReference>
<dbReference type="PDBsum" id="6EOO"/>
<dbReference type="PDBsum" id="6EOP"/>
<dbReference type="PDBsum" id="6EOS"/>
<dbReference type="PDBsum" id="6EOT"/>
<dbReference type="PDBsum" id="6HP8"/>
<dbReference type="PDBsum" id="6QZW"/>
<dbReference type="PDBsum" id="6TRW"/>
<dbReference type="PDBsum" id="6TRX"/>
<dbReference type="PDBsum" id="7A3G"/>
<dbReference type="PDBsum" id="7A3I"/>
<dbReference type="PDBsum" id="7A3J"/>
<dbReference type="PDBsum" id="7A3K"/>
<dbReference type="PDBsum" id="7A3L"/>
<dbReference type="PDBsum" id="7AYQ"/>
<dbReference type="PDBsum" id="7AYR"/>
<dbReference type="PDBsum" id="7OR4"/>
<dbReference type="PDBsum" id="7OZ7"/>
<dbReference type="PDBsum" id="7SVM"/>
<dbReference type="PDBsum" id="7SVO"/>
<dbReference type="SASBDB" id="Q6V1X1"/>
<dbReference type="SMR" id="Q6V1X1"/>
<dbReference type="BioGRID" id="120226">
    <property type="interactions" value="53"/>
</dbReference>
<dbReference type="FunCoup" id="Q6V1X1">
    <property type="interactions" value="2853"/>
</dbReference>
<dbReference type="IntAct" id="Q6V1X1">
    <property type="interactions" value="38"/>
</dbReference>
<dbReference type="MINT" id="Q6V1X1"/>
<dbReference type="STRING" id="9606.ENSP00000339208"/>
<dbReference type="BindingDB" id="Q6V1X1"/>
<dbReference type="ChEMBL" id="CHEMBL4657"/>
<dbReference type="DrugBank" id="DB06182">
    <property type="generic name" value="Talabostat"/>
</dbReference>
<dbReference type="DrugCentral" id="Q6V1X1"/>
<dbReference type="GuidetoPHARMACOLOGY" id="2356"/>
<dbReference type="ESTHER" id="human-DPP8">
    <property type="family name" value="DPP4N_Peptidase_S9"/>
</dbReference>
<dbReference type="MEROPS" id="S09.018"/>
<dbReference type="iPTMnet" id="Q6V1X1"/>
<dbReference type="PhosphoSitePlus" id="Q6V1X1"/>
<dbReference type="BioMuta" id="DPP8"/>
<dbReference type="DMDM" id="67460301"/>
<dbReference type="jPOST" id="Q6V1X1"/>
<dbReference type="MassIVE" id="Q6V1X1"/>
<dbReference type="PaxDb" id="9606-ENSP00000339208"/>
<dbReference type="PeptideAtlas" id="Q6V1X1"/>
<dbReference type="ProteomicsDB" id="67709">
    <molecule id="Q6V1X1-1"/>
</dbReference>
<dbReference type="ProteomicsDB" id="67710">
    <molecule id="Q6V1X1-2"/>
</dbReference>
<dbReference type="ProteomicsDB" id="67711">
    <molecule id="Q6V1X1-3"/>
</dbReference>
<dbReference type="ProteomicsDB" id="67712">
    <molecule id="Q6V1X1-4"/>
</dbReference>
<dbReference type="ProteomicsDB" id="67713">
    <molecule id="Q6V1X1-5"/>
</dbReference>
<dbReference type="ProteomicsDB" id="67714">
    <molecule id="Q6V1X1-6"/>
</dbReference>
<dbReference type="Pumba" id="Q6V1X1"/>
<dbReference type="Antibodypedia" id="2238">
    <property type="antibodies" value="307 antibodies from 31 providers"/>
</dbReference>
<dbReference type="DNASU" id="54878"/>
<dbReference type="Ensembl" id="ENST00000300141.11">
    <molecule id="Q6V1X1-3"/>
    <property type="protein sequence ID" value="ENSP00000300141.6"/>
    <property type="gene ID" value="ENSG00000074603.19"/>
</dbReference>
<dbReference type="Ensembl" id="ENST00000321147.10">
    <molecule id="Q6V1X1-2"/>
    <property type="protein sequence ID" value="ENSP00000318111.6"/>
    <property type="gene ID" value="ENSG00000074603.19"/>
</dbReference>
<dbReference type="Ensembl" id="ENST00000341861.9">
    <molecule id="Q6V1X1-1"/>
    <property type="protein sequence ID" value="ENSP00000339208.5"/>
    <property type="gene ID" value="ENSG00000074603.19"/>
</dbReference>
<dbReference type="Ensembl" id="ENST00000358939.8">
    <molecule id="Q6V1X1-4"/>
    <property type="protein sequence ID" value="ENSP00000351817.4"/>
    <property type="gene ID" value="ENSG00000074603.19"/>
</dbReference>
<dbReference type="Ensembl" id="ENST00000559233.5">
    <molecule id="Q6V1X1-1"/>
    <property type="protein sequence ID" value="ENSP00000453954.1"/>
    <property type="gene ID" value="ENSG00000074603.19"/>
</dbReference>
<dbReference type="GeneID" id="54878"/>
<dbReference type="KEGG" id="hsa:54878"/>
<dbReference type="MANE-Select" id="ENST00000300141.11">
    <molecule id="Q6V1X1-3"/>
    <property type="protein sequence ID" value="ENSP00000300141.6"/>
    <property type="RefSeq nucleotide sequence ID" value="NM_130434.5"/>
    <property type="RefSeq protein sequence ID" value="NP_569118.1"/>
</dbReference>
<dbReference type="UCSC" id="uc002aov.4">
    <molecule id="Q6V1X1-1"/>
    <property type="organism name" value="human"/>
</dbReference>
<dbReference type="AGR" id="HGNC:16490"/>
<dbReference type="CTD" id="54878"/>
<dbReference type="DisGeNET" id="54878"/>
<dbReference type="GeneCards" id="DPP8"/>
<dbReference type="HGNC" id="HGNC:16490">
    <property type="gene designation" value="DPP8"/>
</dbReference>
<dbReference type="HPA" id="ENSG00000074603">
    <property type="expression patterns" value="Low tissue specificity"/>
</dbReference>
<dbReference type="MIM" id="606819">
    <property type="type" value="gene"/>
</dbReference>
<dbReference type="neXtProt" id="NX_Q6V1X1"/>
<dbReference type="OpenTargets" id="ENSG00000074603"/>
<dbReference type="PharmGKB" id="PA27470"/>
<dbReference type="VEuPathDB" id="HostDB:ENSG00000074603"/>
<dbReference type="eggNOG" id="KOG2281">
    <property type="taxonomic scope" value="Eukaryota"/>
</dbReference>
<dbReference type="GeneTree" id="ENSGT00940000160717"/>
<dbReference type="HOGENOM" id="CLU_006105_1_0_1"/>
<dbReference type="InParanoid" id="Q6V1X1"/>
<dbReference type="OMA" id="PVTQWEL"/>
<dbReference type="OrthoDB" id="16520at2759"/>
<dbReference type="PAN-GO" id="Q6V1X1">
    <property type="GO annotations" value="1 GO annotation based on evolutionary models"/>
</dbReference>
<dbReference type="PhylomeDB" id="Q6V1X1"/>
<dbReference type="TreeFam" id="TF313309"/>
<dbReference type="PathwayCommons" id="Q6V1X1"/>
<dbReference type="SABIO-RK" id="Q6V1X1"/>
<dbReference type="SignaLink" id="Q6V1X1"/>
<dbReference type="BioGRID-ORCS" id="54878">
    <property type="hits" value="9 hits in 1160 CRISPR screens"/>
</dbReference>
<dbReference type="ChiTaRS" id="DPP8">
    <property type="organism name" value="human"/>
</dbReference>
<dbReference type="GeneWiki" id="DPP8"/>
<dbReference type="GenomeRNAi" id="54878"/>
<dbReference type="Pharos" id="Q6V1X1">
    <property type="development level" value="Tchem"/>
</dbReference>
<dbReference type="PRO" id="PR:Q6V1X1"/>
<dbReference type="Proteomes" id="UP000005640">
    <property type="component" value="Chromosome 15"/>
</dbReference>
<dbReference type="RNAct" id="Q6V1X1">
    <property type="molecule type" value="protein"/>
</dbReference>
<dbReference type="Bgee" id="ENSG00000074603">
    <property type="expression patterns" value="Expressed in buccal mucosa cell and 207 other cell types or tissues"/>
</dbReference>
<dbReference type="ExpressionAtlas" id="Q6V1X1">
    <property type="expression patterns" value="baseline and differential"/>
</dbReference>
<dbReference type="GO" id="GO:0005737">
    <property type="term" value="C:cytoplasm"/>
    <property type="evidence" value="ECO:0000314"/>
    <property type="project" value="UniProt"/>
</dbReference>
<dbReference type="GO" id="GO:0005829">
    <property type="term" value="C:cytosol"/>
    <property type="evidence" value="ECO:0000314"/>
    <property type="project" value="HPA"/>
</dbReference>
<dbReference type="GO" id="GO:0004177">
    <property type="term" value="F:aminopeptidase activity"/>
    <property type="evidence" value="ECO:0007669"/>
    <property type="project" value="UniProtKB-KW"/>
</dbReference>
<dbReference type="GO" id="GO:0008239">
    <property type="term" value="F:dipeptidyl-peptidase activity"/>
    <property type="evidence" value="ECO:0000314"/>
    <property type="project" value="UniProtKB"/>
</dbReference>
<dbReference type="GO" id="GO:0008236">
    <property type="term" value="F:serine-type peptidase activity"/>
    <property type="evidence" value="ECO:0007669"/>
    <property type="project" value="UniProtKB-KW"/>
</dbReference>
<dbReference type="GO" id="GO:0006915">
    <property type="term" value="P:apoptotic process"/>
    <property type="evidence" value="ECO:0007669"/>
    <property type="project" value="UniProtKB-KW"/>
</dbReference>
<dbReference type="GO" id="GO:0006955">
    <property type="term" value="P:immune response"/>
    <property type="evidence" value="ECO:0000304"/>
    <property type="project" value="UniProtKB"/>
</dbReference>
<dbReference type="GO" id="GO:0043069">
    <property type="term" value="P:negative regulation of programmed cell death"/>
    <property type="evidence" value="ECO:0000314"/>
    <property type="project" value="UniProt"/>
</dbReference>
<dbReference type="GO" id="GO:0006508">
    <property type="term" value="P:proteolysis"/>
    <property type="evidence" value="ECO:0000318"/>
    <property type="project" value="GO_Central"/>
</dbReference>
<dbReference type="DisProt" id="DP02699"/>
<dbReference type="FunFam" id="2.140.10.30:FF:000002">
    <property type="entry name" value="Dipeptidyl peptidase 8-like isoform"/>
    <property type="match status" value="1"/>
</dbReference>
<dbReference type="FunFam" id="3.40.50.1820:FF:000016">
    <property type="entry name" value="Dipeptidyl peptidase 8-like isoform"/>
    <property type="match status" value="1"/>
</dbReference>
<dbReference type="Gene3D" id="3.40.50.1820">
    <property type="entry name" value="alpha/beta hydrolase"/>
    <property type="match status" value="1"/>
</dbReference>
<dbReference type="Gene3D" id="2.140.10.30">
    <property type="entry name" value="Dipeptidylpeptidase IV, N-terminal domain"/>
    <property type="match status" value="1"/>
</dbReference>
<dbReference type="InterPro" id="IPR029058">
    <property type="entry name" value="AB_hydrolase_fold"/>
</dbReference>
<dbReference type="InterPro" id="IPR045785">
    <property type="entry name" value="Dpp_8/9_N"/>
</dbReference>
<dbReference type="InterPro" id="IPR001375">
    <property type="entry name" value="Peptidase_S9_cat"/>
</dbReference>
<dbReference type="InterPro" id="IPR002469">
    <property type="entry name" value="Peptidase_S9B_N"/>
</dbReference>
<dbReference type="InterPro" id="IPR050278">
    <property type="entry name" value="Serine_Prot_S9B/DPPIV"/>
</dbReference>
<dbReference type="PANTHER" id="PTHR11731:SF98">
    <property type="entry name" value="DIPEPTIDYL PEPTIDASE 8"/>
    <property type="match status" value="1"/>
</dbReference>
<dbReference type="PANTHER" id="PTHR11731">
    <property type="entry name" value="PROTEASE FAMILY S9B,C DIPEPTIDYL-PEPTIDASE IV-RELATED"/>
    <property type="match status" value="1"/>
</dbReference>
<dbReference type="Pfam" id="PF19520">
    <property type="entry name" value="Dpp_8_9_N"/>
    <property type="match status" value="1"/>
</dbReference>
<dbReference type="Pfam" id="PF00930">
    <property type="entry name" value="DPPIV_N"/>
    <property type="match status" value="1"/>
</dbReference>
<dbReference type="Pfam" id="PF00326">
    <property type="entry name" value="Peptidase_S9"/>
    <property type="match status" value="1"/>
</dbReference>
<dbReference type="SUPFAM" id="SSF53474">
    <property type="entry name" value="alpha/beta-Hydrolases"/>
    <property type="match status" value="1"/>
</dbReference>
<dbReference type="SUPFAM" id="SSF82171">
    <property type="entry name" value="DPP6 N-terminal domain-like"/>
    <property type="match status" value="1"/>
</dbReference>
<organism>
    <name type="scientific">Homo sapiens</name>
    <name type="common">Human</name>
    <dbReference type="NCBI Taxonomy" id="9606"/>
    <lineage>
        <taxon>Eukaryota</taxon>
        <taxon>Metazoa</taxon>
        <taxon>Chordata</taxon>
        <taxon>Craniata</taxon>
        <taxon>Vertebrata</taxon>
        <taxon>Euteleostomi</taxon>
        <taxon>Mammalia</taxon>
        <taxon>Eutheria</taxon>
        <taxon>Euarchontoglires</taxon>
        <taxon>Primates</taxon>
        <taxon>Haplorrhini</taxon>
        <taxon>Catarrhini</taxon>
        <taxon>Hominidae</taxon>
        <taxon>Homo</taxon>
    </lineage>
</organism>
<gene>
    <name evidence="15 23" type="primary">DPP8</name>
    <name type="synonym">DPRP1</name>
    <name type="ORF">MSTP097</name>
    <name type="ORF">MSTP135</name>
    <name type="ORF">MSTP141</name>
</gene>
<proteinExistence type="evidence at protein level"/>
<reference key="1">
    <citation type="journal article" date="2000" name="Eur. J. Biochem.">
        <title>Cloning, expression and chromosomal localization of a novel human dipeptidyl peptidase (DPP) IV homolog, DPP8.</title>
        <authorList>
            <person name="Abbott C.A."/>
            <person name="Yu D.M.T."/>
            <person name="Woollatt E."/>
            <person name="Sutherland G.R."/>
            <person name="McCaughan G.W."/>
            <person name="Gorrell M.D."/>
        </authorList>
    </citation>
    <scope>NUCLEOTIDE SEQUENCE [MRNA] (ISOFORM 3)</scope>
    <scope>NUCLEOTIDE SEQUENCE [MRNA] OF 334-898 (ISOFORM 4)</scope>
    <scope>NUCLEOTIDE SEQUENCE [MRNA] OF 540-898 (ISOFORM 5)</scope>
    <scope>NUCLEOTIDE SEQUENCE [MRNA] OF 260-792 (ISOFORM 6)</scope>
    <scope>FUNCTION</scope>
    <scope>CATALYTIC ACTIVITY</scope>
    <scope>ACTIVITY REGULATION</scope>
    <scope>TISSUE SPECIFICITY</scope>
    <scope>INDUCTION</scope>
    <scope>SUBCELLULAR LOCATION</scope>
    <source>
        <tissue>Placenta</tissue>
    </source>
</reference>
<reference key="2">
    <citation type="journal article" date="2003" name="Biochem. J.">
        <title>Cloning and characterization of dipeptidyl peptidase 10, a new member of an emerging subgroup of serine proteases.</title>
        <authorList>
            <person name="Qi S.Y."/>
            <person name="Riviere P.J."/>
            <person name="Trojnar J."/>
            <person name="Junien J.-L."/>
            <person name="Akinsanya K.O."/>
        </authorList>
    </citation>
    <scope>NUCLEOTIDE SEQUENCE [MRNA] (ISOFORM 3)</scope>
    <scope>FUNCTION</scope>
    <scope>CATALYTIC ACTIVITY</scope>
    <scope>ACTIVITY REGULATION</scope>
    <scope>BIOPHYSICOCHEMICAL PROPERTIES</scope>
    <scope>SUBCELLULAR LOCATION</scope>
    <scope>TISSUE SPECIFICITY</scope>
    <source>
        <tissue>Testis</tissue>
    </source>
</reference>
<reference key="3">
    <citation type="submission" date="2003-07" db="EMBL/GenBank/DDBJ databases">
        <authorList>
            <person name="Sha J.H."/>
            <person name="Zhou Z.M."/>
            <person name="Li J.M."/>
        </authorList>
    </citation>
    <scope>NUCLEOTIDE SEQUENCE [MRNA] (ISOFORM 1)</scope>
    <source>
        <tissue>Testis</tissue>
    </source>
</reference>
<reference key="4">
    <citation type="journal article" date="2004" name="Nat. Genet.">
        <title>Complete sequencing and characterization of 21,243 full-length human cDNAs.</title>
        <authorList>
            <person name="Ota T."/>
            <person name="Suzuki Y."/>
            <person name="Nishikawa T."/>
            <person name="Otsuki T."/>
            <person name="Sugiyama T."/>
            <person name="Irie R."/>
            <person name="Wakamatsu A."/>
            <person name="Hayashi K."/>
            <person name="Sato H."/>
            <person name="Nagai K."/>
            <person name="Kimura K."/>
            <person name="Makita H."/>
            <person name="Sekine M."/>
            <person name="Obayashi M."/>
            <person name="Nishi T."/>
            <person name="Shibahara T."/>
            <person name="Tanaka T."/>
            <person name="Ishii S."/>
            <person name="Yamamoto J."/>
            <person name="Saito K."/>
            <person name="Kawai Y."/>
            <person name="Isono Y."/>
            <person name="Nakamura Y."/>
            <person name="Nagahari K."/>
            <person name="Murakami K."/>
            <person name="Yasuda T."/>
            <person name="Iwayanagi T."/>
            <person name="Wagatsuma M."/>
            <person name="Shiratori A."/>
            <person name="Sudo H."/>
            <person name="Hosoiri T."/>
            <person name="Kaku Y."/>
            <person name="Kodaira H."/>
            <person name="Kondo H."/>
            <person name="Sugawara M."/>
            <person name="Takahashi M."/>
            <person name="Kanda K."/>
            <person name="Yokoi T."/>
            <person name="Furuya T."/>
            <person name="Kikkawa E."/>
            <person name="Omura Y."/>
            <person name="Abe K."/>
            <person name="Kamihara K."/>
            <person name="Katsuta N."/>
            <person name="Sato K."/>
            <person name="Tanikawa M."/>
            <person name="Yamazaki M."/>
            <person name="Ninomiya K."/>
            <person name="Ishibashi T."/>
            <person name="Yamashita H."/>
            <person name="Murakawa K."/>
            <person name="Fujimori K."/>
            <person name="Tanai H."/>
            <person name="Kimata M."/>
            <person name="Watanabe M."/>
            <person name="Hiraoka S."/>
            <person name="Chiba Y."/>
            <person name="Ishida S."/>
            <person name="Ono Y."/>
            <person name="Takiguchi S."/>
            <person name="Watanabe S."/>
            <person name="Yosida M."/>
            <person name="Hotuta T."/>
            <person name="Kusano J."/>
            <person name="Kanehori K."/>
            <person name="Takahashi-Fujii A."/>
            <person name="Hara H."/>
            <person name="Tanase T.-O."/>
            <person name="Nomura Y."/>
            <person name="Togiya S."/>
            <person name="Komai F."/>
            <person name="Hara R."/>
            <person name="Takeuchi K."/>
            <person name="Arita M."/>
            <person name="Imose N."/>
            <person name="Musashino K."/>
            <person name="Yuuki H."/>
            <person name="Oshima A."/>
            <person name="Sasaki N."/>
            <person name="Aotsuka S."/>
            <person name="Yoshikawa Y."/>
            <person name="Matsunawa H."/>
            <person name="Ichihara T."/>
            <person name="Shiohata N."/>
            <person name="Sano S."/>
            <person name="Moriya S."/>
            <person name="Momiyama H."/>
            <person name="Satoh N."/>
            <person name="Takami S."/>
            <person name="Terashima Y."/>
            <person name="Suzuki O."/>
            <person name="Nakagawa S."/>
            <person name="Senoh A."/>
            <person name="Mizoguchi H."/>
            <person name="Goto Y."/>
            <person name="Shimizu F."/>
            <person name="Wakebe H."/>
            <person name="Hishigaki H."/>
            <person name="Watanabe T."/>
            <person name="Sugiyama A."/>
            <person name="Takemoto M."/>
            <person name="Kawakami B."/>
            <person name="Yamazaki M."/>
            <person name="Watanabe K."/>
            <person name="Kumagai A."/>
            <person name="Itakura S."/>
            <person name="Fukuzumi Y."/>
            <person name="Fujimori Y."/>
            <person name="Komiyama M."/>
            <person name="Tashiro H."/>
            <person name="Tanigami A."/>
            <person name="Fujiwara T."/>
            <person name="Ono T."/>
            <person name="Yamada K."/>
            <person name="Fujii Y."/>
            <person name="Ozaki K."/>
            <person name="Hirao M."/>
            <person name="Ohmori Y."/>
            <person name="Kawabata A."/>
            <person name="Hikiji T."/>
            <person name="Kobatake N."/>
            <person name="Inagaki H."/>
            <person name="Ikema Y."/>
            <person name="Okamoto S."/>
            <person name="Okitani R."/>
            <person name="Kawakami T."/>
            <person name="Noguchi S."/>
            <person name="Itoh T."/>
            <person name="Shigeta K."/>
            <person name="Senba T."/>
            <person name="Matsumura K."/>
            <person name="Nakajima Y."/>
            <person name="Mizuno T."/>
            <person name="Morinaga M."/>
            <person name="Sasaki M."/>
            <person name="Togashi T."/>
            <person name="Oyama M."/>
            <person name="Hata H."/>
            <person name="Watanabe M."/>
            <person name="Komatsu T."/>
            <person name="Mizushima-Sugano J."/>
            <person name="Satoh T."/>
            <person name="Shirai Y."/>
            <person name="Takahashi Y."/>
            <person name="Nakagawa K."/>
            <person name="Okumura K."/>
            <person name="Nagase T."/>
            <person name="Nomura N."/>
            <person name="Kikuchi H."/>
            <person name="Masuho Y."/>
            <person name="Yamashita R."/>
            <person name="Nakai K."/>
            <person name="Yada T."/>
            <person name="Nakamura Y."/>
            <person name="Ohara O."/>
            <person name="Isogai T."/>
            <person name="Sugano S."/>
        </authorList>
    </citation>
    <scope>NUCLEOTIDE SEQUENCE [LARGE SCALE MRNA] (ISOFORM 4)</scope>
    <scope>NUCLEOTIDE SEQUENCE [LARGE SCALE MRNA] OF 211-898 (ISOFORM 2)</scope>
    <source>
        <tissue>Hepatoma</tissue>
        <tissue>Placenta</tissue>
    </source>
</reference>
<reference key="5">
    <citation type="journal article" date="2004" name="Genome Res.">
        <title>The status, quality, and expansion of the NIH full-length cDNA project: the Mammalian Gene Collection (MGC).</title>
        <authorList>
            <consortium name="The MGC Project Team"/>
        </authorList>
    </citation>
    <scope>NUCLEOTIDE SEQUENCE [LARGE SCALE MRNA] (ISOFORMS 1 AND 2)</scope>
    <source>
        <tissue>Testis</tissue>
    </source>
</reference>
<reference key="6">
    <citation type="submission" date="1999-08" db="EMBL/GenBank/DDBJ databases">
        <authorList>
            <person name="Zhao B."/>
            <person name="Xu H.S."/>
            <person name="Tong Y.K."/>
            <person name="Sheng H."/>
            <person name="Qin B.M."/>
            <person name="Liu Y.Q."/>
            <person name="Liu B."/>
            <person name="Wang X.Y."/>
            <person name="Zhang Q."/>
            <person name="Song L."/>
            <person name="Gao Y."/>
            <person name="Zhang C.L."/>
            <person name="Ye J."/>
            <person name="Ji X.J."/>
            <person name="Liu B.H."/>
            <person name="Lu H."/>
            <person name="Chen J.Z."/>
            <person name="Cai M.Q."/>
            <person name="Zheng W.Y."/>
            <person name="Teng C.Y."/>
            <person name="Liu Q."/>
            <person name="Yu L.T."/>
            <person name="Lin J."/>
            <person name="Gong Q."/>
            <person name="Zhang A.M."/>
            <person name="Gao R.L."/>
            <person name="Hui R.T."/>
        </authorList>
    </citation>
    <scope>NUCLEOTIDE SEQUENCE [LARGE SCALE MRNA] OF 561-898</scope>
    <source>
        <tissue>Aorta</tissue>
    </source>
</reference>
<reference key="7">
    <citation type="journal article" date="2003" name="Biochemistry">
        <title>Structural requirements for catalysis, expression, and dimerization in the CD26/DPIV gene family.</title>
        <authorList>
            <person name="Ajami K."/>
            <person name="Abbott C.A."/>
            <person name="Obradovic M."/>
            <person name="Gysbers V."/>
            <person name="Kaehne T."/>
            <person name="McCaughan G.W."/>
            <person name="Gorrell M.D."/>
        </authorList>
    </citation>
    <scope>FUNCTION</scope>
    <scope>MUTAGENESIS OF GLU-275; SER-755; ASP-833 AND HIS-865</scope>
    <scope>CATALYTIC ACTIVITY</scope>
    <scope>ACTIVE SITE</scope>
    <scope>BIOPHYSICOCHEMICAL PROPERTIES</scope>
    <scope>SUBCELLULAR LOCATION</scope>
</reference>
<reference key="8">
    <citation type="journal article" date="2004" name="Protein Expr. Purif.">
        <title>Purification and characterization of human prolyl dipeptidase DPP8 in Sf9 insect cells.</title>
        <authorList>
            <person name="Chen Y.-S."/>
            <person name="Chien C.-H."/>
            <person name="Goparaju C.M."/>
            <person name="Hsu J.T.-A."/>
            <person name="Liang P.-H."/>
            <person name="Chen X."/>
        </authorList>
    </citation>
    <scope>BIOPHYSICOCHEMICAL PROPERTIES</scope>
    <scope>FUNCTION</scope>
    <scope>CATALYTIC ACTIVITY</scope>
</reference>
<reference key="9">
    <citation type="journal article" date="2005" name="Bioorg. Med. Chem. Lett.">
        <title>Novel isoindoline compounds for potent and selective inhibition of prolyl dipeptidase DPP8.</title>
        <authorList>
            <person name="Jiaang W.-T."/>
            <person name="Chen Y.-S."/>
            <person name="Hsu T."/>
            <person name="Wu S.-H."/>
            <person name="Chien C.-H."/>
            <person name="Chang C.-N."/>
            <person name="Chang S.-P."/>
            <person name="Lee S.-J."/>
            <person name="Chen X."/>
        </authorList>
    </citation>
    <scope>FUNCTION</scope>
    <scope>CATALYTIC ACTIVITY</scope>
    <scope>ACTIVITY REGULATION</scope>
</reference>
<reference key="10">
    <citation type="journal article" date="2010" name="Biol. Chem.">
        <title>Hydrophilic residues surrounding the S1 and S2 pockets contribute to dimerisation and catalysis in human dipeptidyl peptidase 8 (DP8).</title>
        <authorList>
            <person name="Pitman M.R."/>
            <person name="Menz R.I."/>
            <person name="Abbott C.A."/>
        </authorList>
    </citation>
    <scope>FUNCTION</scope>
    <scope>CATALYTIC ACTIVITY</scope>
    <scope>SUBUNIT</scope>
    <scope>MUTAGENESIS OF ASP-451 AND ASP-788</scope>
</reference>
<reference key="11">
    <citation type="journal article" date="2017" name="Nat. Chem. Biol.">
        <title>DPP8 and DPP9 inhibition induces pro-caspase-1-dependent monocyte and macrophage pyroptosis.</title>
        <authorList>
            <person name="Okondo M.C."/>
            <person name="Johnson D.C."/>
            <person name="Sridharan R."/>
            <person name="Go E.B."/>
            <person name="Chui A.J."/>
            <person name="Wang M.S."/>
            <person name="Poplawski S.E."/>
            <person name="Wu W."/>
            <person name="Liu Y."/>
            <person name="Lai J.H."/>
            <person name="Sanford D.G."/>
            <person name="Arciprete M.O."/>
            <person name="Golub T.R."/>
            <person name="Bachovchin W.W."/>
            <person name="Bachovchin D.A."/>
        </authorList>
    </citation>
    <scope>FUNCTION</scope>
    <scope>ACTIVITY REGULATION</scope>
</reference>
<reference key="12">
    <citation type="journal article" date="2018" name="Nat. Med.">
        <title>DPP8/DPP9 inhibitor-induced pyroptosis for treatment of acute myeloid leukemia.</title>
        <authorList>
            <person name="Johnson D.C."/>
            <person name="Taabazuing C.Y."/>
            <person name="Okondo M.C."/>
            <person name="Chui A.J."/>
            <person name="Rao S.D."/>
            <person name="Brown F.C."/>
            <person name="Reed C."/>
            <person name="Peguero E."/>
            <person name="de Stanchina E."/>
            <person name="Kentsis A."/>
            <person name="Bachovchin D.A."/>
        </authorList>
    </citation>
    <scope>FUNCTION</scope>
    <scope>ACTIVITY REGULATION</scope>
</reference>
<reference key="13">
    <citation type="journal article" date="2020" name="Cell Death Dis.">
        <title>DPP8/9 inhibitors activate the CARD8 inflammasome in resting lymphocytes.</title>
        <authorList>
            <person name="Johnson D.C."/>
            <person name="Okondo M.C."/>
            <person name="Orth E.L."/>
            <person name="Rao S.D."/>
            <person name="Huang H.C."/>
            <person name="Ball D.P."/>
            <person name="Bachovchin D.A."/>
        </authorList>
    </citation>
    <scope>FUNCTION</scope>
    <scope>ACTIVITY REGULATION</scope>
</reference>
<reference key="14">
    <citation type="journal article" date="2021" name="Immunity">
        <title>Dipeptidyl peptidase 9 sets a threshold for CARD8 inflammasome formation by sequestering its active C-terminal fragment.</title>
        <authorList>
            <person name="Sharif H."/>
            <person name="Hollingsworth L.R."/>
            <person name="Griswold A.R."/>
            <person name="Hsiao J.C."/>
            <person name="Wang Q."/>
            <person name="Bachovchin D.A."/>
            <person name="Wu H."/>
        </authorList>
    </citation>
    <scope>FUNCTION</scope>
</reference>
<reference key="15">
    <citation type="journal article" date="2021" name="Nature">
        <title>Structural and biochemical mechanisms of NLRP1 inhibition by DPP9.</title>
        <authorList>
            <person name="Huang M."/>
            <person name="Zhang X."/>
            <person name="Toh G.A."/>
            <person name="Gong Q."/>
            <person name="Wang J."/>
            <person name="Han Z."/>
            <person name="Wu B."/>
            <person name="Zhong F."/>
            <person name="Chai J."/>
        </authorList>
    </citation>
    <scope>FUNCTION</scope>
</reference>
<reference key="16">
    <citation type="journal article" date="2021" name="Nature">
        <title>DPP9 sequesters the C terminus of NLRP1 to repress inflammasome activation.</title>
        <authorList>
            <person name="Hollingsworth L.R."/>
            <person name="Sharif H."/>
            <person name="Griswold A.R."/>
            <person name="Fontana P."/>
            <person name="Mintseris J."/>
            <person name="Dagbay K.B."/>
            <person name="Paulo J.A."/>
            <person name="Gygi S.P."/>
            <person name="Bachovchin D.A."/>
            <person name="Wu H."/>
        </authorList>
    </citation>
    <scope>FUNCTION</scope>
</reference>
<reference evidence="24 25 26 27" key="17">
    <citation type="journal article" date="2018" name="Proc. Natl. Acad. Sci. U.S.A.">
        <title>Structures and mechanism of dipeptidyl peptidases 8 and 9, important players in cellular homeostasis and cancer.</title>
        <authorList>
            <person name="Ross B."/>
            <person name="Krapp S."/>
            <person name="Augustin M."/>
            <person name="Kierfersauer R."/>
            <person name="Arciniega M."/>
            <person name="Geiss-Friedlander R."/>
            <person name="Huber R."/>
        </authorList>
    </citation>
    <scope>X-RAY CRYSTALLOGRAPHY (2.40 ANGSTROMS) IN COMPLEXES WITH SYNTHETIC INHIBITORS</scope>
    <scope>FUNCTION</scope>
    <scope>CATALYTIC ACTIVITY</scope>
    <scope>SUBUNIT</scope>
    <scope>ACTIVE SITE</scope>
</reference>
<sequence>MWKRSEQMKIKSGKCNMAAAMETEQLGVEIFETADCEENIESQDRPKLEPFYVERYSWSQLKKLLADTRKYHGYMMAKAPHDFMFVKRNDPDGPHSDRIYYLAMSGENRENTLFYSEIPKTINRAAVLMLSWKPLLDLFQATLDYGMYSREEELLRERKRIGTVGIASYDYHQGSGTFLFQAGSGIYHVKDGGPQGFTQQPLRPNLVETSCPNIRMDPKLCPADPDWIAFIHSNDIWISNIVTREERRLTYVHNELANMEEDARSAGVATFVLQEEFDRYSGYWWCPKAETTPSGGKILRILYEENDESEVEIIHVTSPMLETRRADSFRYPKTGTANPKVTFKMSEIMIDAEGRIIDVIDKELIQPFEILFEGVEYIARAGWTPEGKYAWSILLDRSQTRLQIVLISPELFIPVEDDVMERQRLIESVPDSVTPLIIYEETTDIWINIHDIFHVFPQSHEEEIEFIFASECKTGFRHLYKITSILKESKYKRSSGGLPAPSDFKCPIKEEIAITSGEWEVLGRHGSNIQVDEVRRLVYFEGTKDSPLEHHLYVVSYVNPGEVTRLTDRGYSHSCCISQHCDFFISKYSNQKNPHCVSLYKLSSPEDDPTCKTKEFWATILDSAGPLPDYTPPEIFSFESTTGFTLYGMLYKPHDLQPGKKYPTVLFIYGGPQVQLVNNRFKGVKYFRLNTLASLGYVVVVIDNRGSCHRGLKFEGAFKYKMGQIEIDDQVEGLQYLASRYDFIDLDRVGIHGWSYGGYLSLMALMQRSDIFRVAIAGAPVTLWIFYDTGYTERYMGHPDQNEQGYYLGSVAMQAEKFPSEPNRLLLLHGFLDENVHFAHTSILLSFLVRAGKPYDLQIYPQERHSIRVPESGEHYELHLLHYLQENLGSRIAALKVI</sequence>
<feature type="chain" id="PRO_0000122413" description="Dipeptidyl peptidase 8">
    <location>
        <begin position="1"/>
        <end position="898"/>
    </location>
</feature>
<feature type="active site" description="Charge relay system" evidence="21 22">
    <location>
        <position position="755"/>
    </location>
</feature>
<feature type="active site" description="Charge relay system" evidence="21 22">
    <location>
        <position position="833"/>
    </location>
</feature>
<feature type="active site" description="Charge relay system" evidence="21 22">
    <location>
        <position position="865"/>
    </location>
</feature>
<feature type="splice variant" id="VSP_013860" description="In isoform 3 and isoform 4." evidence="15 17 18">
    <location>
        <begin position="1"/>
        <end position="16"/>
    </location>
</feature>
<feature type="splice variant" id="VSP_013861" description="In isoform 6." evidence="15">
    <location>
        <begin position="358"/>
        <end position="530"/>
    </location>
</feature>
<feature type="splice variant" id="VSP_013862" description="In isoform 4." evidence="15 18">
    <location>
        <begin position="674"/>
        <end position="773"/>
    </location>
</feature>
<feature type="splice variant" id="VSP_013863" description="In isoform 5." evidence="15">
    <location>
        <begin position="674"/>
        <end position="722"/>
    </location>
</feature>
<feature type="splice variant" id="VSP_013864" description="In isoform 2." evidence="18 19">
    <location>
        <begin position="723"/>
        <end position="773"/>
    </location>
</feature>
<feature type="mutagenesis site" description="13-fold reduction in affinity for Ala-Pro-AFC; no effect on subcellular location." evidence="3">
    <original>E</original>
    <variation>K</variation>
    <location>
        <position position="275"/>
    </location>
</feature>
<feature type="mutagenesis site" description="Reduced dimerization and reduced enzyme activity." evidence="7">
    <original>D</original>
    <variation>F</variation>
    <location>
        <position position="451"/>
    </location>
</feature>
<feature type="mutagenesis site" description="Abolishes activity; no effect on subcellular location." evidence="3">
    <original>S</original>
    <variation>A</variation>
    <location>
        <position position="755"/>
    </location>
</feature>
<feature type="mutagenesis site" description="Strongly reduced enzyme activity." evidence="7">
    <original>D</original>
    <variation>A</variation>
    <variation>S</variation>
    <variation>V</variation>
    <location>
        <position position="788"/>
    </location>
</feature>
<feature type="mutagenesis site" description="Loss of enzyme activity. Loss of dimerization." evidence="7">
    <original>D</original>
    <variation>E</variation>
    <location>
        <position position="788"/>
    </location>
</feature>
<feature type="mutagenesis site" description="Abolishes activity; no effect on subcellular location." evidence="3">
    <original>D</original>
    <variation>A</variation>
    <location>
        <position position="833"/>
    </location>
</feature>
<feature type="mutagenesis site" description="Abolishes activity; no effect on subcellular location." evidence="3">
    <original>H</original>
    <variation>A</variation>
    <location>
        <position position="865"/>
    </location>
</feature>
<feature type="sequence conflict" description="In Ref. 5; BC040203." evidence="20" ref="5">
    <original>S</original>
    <variation>G</variation>
    <location>
        <position position="233"/>
    </location>
</feature>
<feature type="sequence conflict" description="In Ref. 4; BAB55395." evidence="20" ref="4">
    <original>G</original>
    <variation>S</variation>
    <location>
        <position position="570"/>
    </location>
</feature>
<feature type="sequence conflict" description="In Ref. 6; AAQ13650." evidence="20" ref="6">
    <original>Q</original>
    <variation>K</variation>
    <location>
        <position position="673"/>
    </location>
</feature>
<feature type="sequence conflict" description="In Ref. 6; AAQ13650." evidence="20" ref="6">
    <original>Y</original>
    <variation>F</variation>
    <location>
        <position position="686"/>
    </location>
</feature>
<feature type="sequence conflict" description="In Ref. 6; AAQ13650." evidence="20" ref="6">
    <original>AS</original>
    <variation>PF</variation>
    <location>
        <begin position="693"/>
        <end position="694"/>
    </location>
</feature>
<feature type="sequence conflict" description="In Ref. 6; AAQ13650." evidence="20" ref="6">
    <original>V</original>
    <variation>G</variation>
    <location>
        <position position="701"/>
    </location>
</feature>
<feature type="sequence conflict" description="In Ref. 6; AAQ13650." evidence="20" ref="6">
    <original>H</original>
    <variation>P</variation>
    <location>
        <position position="709"/>
    </location>
</feature>
<feature type="sequence conflict" description="In Ref. 6; AAQ13650." evidence="20" ref="6">
    <original>Y</original>
    <variation>F</variation>
    <location>
        <position position="720"/>
    </location>
</feature>
<feature type="sequence conflict" description="In Ref. 6; AAQ13623." evidence="20" ref="6">
    <original>PDQNE</original>
    <variation>LTRMN</variation>
    <location>
        <begin position="799"/>
        <end position="803"/>
    </location>
</feature>
<feature type="sequence conflict" description="In Ref. 6; AAQ13623." evidence="20" ref="6">
    <original>S</original>
    <variation>F</variation>
    <location>
        <position position="820"/>
    </location>
</feature>
<feature type="helix" evidence="28">
    <location>
        <begin position="58"/>
        <end position="69"/>
    </location>
</feature>
<feature type="helix" evidence="30">
    <location>
        <begin position="70"/>
        <end position="72"/>
    </location>
</feature>
<feature type="turn" evidence="28">
    <location>
        <begin position="73"/>
        <end position="75"/>
    </location>
</feature>
<feature type="strand" evidence="28">
    <location>
        <begin position="81"/>
        <end position="87"/>
    </location>
</feature>
<feature type="strand" evidence="28">
    <location>
        <begin position="93"/>
        <end position="103"/>
    </location>
</feature>
<feature type="strand" evidence="32">
    <location>
        <begin position="105"/>
        <end position="109"/>
    </location>
</feature>
<feature type="strand" evidence="28">
    <location>
        <begin position="111"/>
        <end position="121"/>
    </location>
</feature>
<feature type="strand" evidence="28">
    <location>
        <begin position="124"/>
        <end position="126"/>
    </location>
</feature>
<feature type="strand" evidence="28">
    <location>
        <begin position="133"/>
        <end position="136"/>
    </location>
</feature>
<feature type="helix" evidence="28">
    <location>
        <begin position="150"/>
        <end position="158"/>
    </location>
</feature>
<feature type="strand" evidence="31">
    <location>
        <begin position="161"/>
        <end position="164"/>
    </location>
</feature>
<feature type="strand" evidence="33">
    <location>
        <begin position="170"/>
        <end position="172"/>
    </location>
</feature>
<feature type="turn" evidence="28">
    <location>
        <begin position="173"/>
        <end position="175"/>
    </location>
</feature>
<feature type="strand" evidence="28">
    <location>
        <begin position="177"/>
        <end position="182"/>
    </location>
</feature>
<feature type="strand" evidence="28">
    <location>
        <begin position="185"/>
        <end position="190"/>
    </location>
</feature>
<feature type="strand" evidence="28">
    <location>
        <begin position="215"/>
        <end position="220"/>
    </location>
</feature>
<feature type="strand" evidence="28">
    <location>
        <begin position="227"/>
        <end position="232"/>
    </location>
</feature>
<feature type="strand" evidence="28">
    <location>
        <begin position="235"/>
        <end position="240"/>
    </location>
</feature>
<feature type="turn" evidence="28">
    <location>
        <begin position="241"/>
        <end position="243"/>
    </location>
</feature>
<feature type="strand" evidence="28">
    <location>
        <begin position="246"/>
        <end position="248"/>
    </location>
</feature>
<feature type="strand" evidence="32">
    <location>
        <begin position="255"/>
        <end position="257"/>
    </location>
</feature>
<feature type="helix" evidence="28">
    <location>
        <begin position="259"/>
        <end position="261"/>
    </location>
</feature>
<feature type="strand" evidence="28">
    <location>
        <begin position="264"/>
        <end position="268"/>
    </location>
</feature>
<feature type="helix" evidence="28">
    <location>
        <begin position="271"/>
        <end position="276"/>
    </location>
</feature>
<feature type="strand" evidence="28">
    <location>
        <begin position="281"/>
        <end position="285"/>
    </location>
</feature>
<feature type="strand" evidence="29">
    <location>
        <begin position="293"/>
        <end position="295"/>
    </location>
</feature>
<feature type="strand" evidence="28">
    <location>
        <begin position="297"/>
        <end position="307"/>
    </location>
</feature>
<feature type="strand" evidence="34">
    <location>
        <begin position="309"/>
        <end position="311"/>
    </location>
</feature>
<feature type="strand" evidence="28">
    <location>
        <begin position="313"/>
        <end position="317"/>
    </location>
</feature>
<feature type="helix" evidence="28">
    <location>
        <begin position="321"/>
        <end position="323"/>
    </location>
</feature>
<feature type="strand" evidence="28">
    <location>
        <begin position="326"/>
        <end position="330"/>
    </location>
</feature>
<feature type="strand" evidence="28">
    <location>
        <begin position="340"/>
        <end position="350"/>
    </location>
</feature>
<feature type="strand" evidence="28">
    <location>
        <begin position="356"/>
        <end position="366"/>
    </location>
</feature>
<feature type="helix" evidence="28">
    <location>
        <begin position="368"/>
        <end position="371"/>
    </location>
</feature>
<feature type="turn" evidence="28">
    <location>
        <begin position="372"/>
        <end position="374"/>
    </location>
</feature>
<feature type="strand" evidence="28">
    <location>
        <begin position="375"/>
        <end position="383"/>
    </location>
</feature>
<feature type="strand" evidence="28">
    <location>
        <begin position="390"/>
        <end position="396"/>
    </location>
</feature>
<feature type="strand" evidence="28">
    <location>
        <begin position="401"/>
        <end position="407"/>
    </location>
</feature>
<feature type="helix" evidence="28">
    <location>
        <begin position="409"/>
        <end position="411"/>
    </location>
</feature>
<feature type="strand" evidence="28">
    <location>
        <begin position="412"/>
        <end position="414"/>
    </location>
</feature>
<feature type="helix" evidence="28">
    <location>
        <begin position="419"/>
        <end position="428"/>
    </location>
</feature>
<feature type="strand" evidence="28">
    <location>
        <begin position="436"/>
        <end position="442"/>
    </location>
</feature>
<feature type="strand" evidence="28">
    <location>
        <begin position="453"/>
        <end position="455"/>
    </location>
</feature>
<feature type="strand" evidence="28">
    <location>
        <begin position="463"/>
        <end position="471"/>
    </location>
</feature>
<feature type="turn" evidence="28">
    <location>
        <begin position="472"/>
        <end position="474"/>
    </location>
</feature>
<feature type="strand" evidence="28">
    <location>
        <begin position="478"/>
        <end position="485"/>
    </location>
</feature>
<feature type="helix" evidence="33">
    <location>
        <begin position="493"/>
        <end position="495"/>
    </location>
</feature>
<feature type="turn" evidence="28">
    <location>
        <begin position="501"/>
        <end position="504"/>
    </location>
</feature>
<feature type="strand" evidence="28">
    <location>
        <begin position="508"/>
        <end position="514"/>
    </location>
</feature>
<feature type="strand" evidence="28">
    <location>
        <begin position="517"/>
        <end position="519"/>
    </location>
</feature>
<feature type="strand" evidence="28">
    <location>
        <begin position="530"/>
        <end position="532"/>
    </location>
</feature>
<feature type="turn" evidence="28">
    <location>
        <begin position="533"/>
        <end position="536"/>
    </location>
</feature>
<feature type="strand" evidence="28">
    <location>
        <begin position="537"/>
        <end position="542"/>
    </location>
</feature>
<feature type="strand" evidence="28">
    <location>
        <begin position="551"/>
        <end position="559"/>
    </location>
</feature>
<feature type="strand" evidence="28">
    <location>
        <begin position="569"/>
        <end position="577"/>
    </location>
</feature>
<feature type="strand" evidence="28">
    <location>
        <begin position="581"/>
        <end position="589"/>
    </location>
</feature>
<feature type="strand" evidence="28">
    <location>
        <begin position="591"/>
        <end position="593"/>
    </location>
</feature>
<feature type="strand" evidence="28">
    <location>
        <begin position="596"/>
        <end position="603"/>
    </location>
</feature>
<feature type="strand" evidence="28">
    <location>
        <begin position="609"/>
        <end position="611"/>
    </location>
</feature>
<feature type="strand" evidence="28">
    <location>
        <begin position="613"/>
        <end position="621"/>
    </location>
</feature>
<feature type="strand" evidence="28">
    <location>
        <begin position="634"/>
        <end position="639"/>
    </location>
</feature>
<feature type="strand" evidence="28">
    <location>
        <begin position="643"/>
        <end position="651"/>
    </location>
</feature>
<feature type="strand" evidence="28">
    <location>
        <begin position="660"/>
        <end position="667"/>
    </location>
</feature>
<feature type="strand" evidence="28">
    <location>
        <begin position="678"/>
        <end position="680"/>
    </location>
</feature>
<feature type="turn" evidence="28">
    <location>
        <begin position="683"/>
        <end position="686"/>
    </location>
</feature>
<feature type="helix" evidence="28">
    <location>
        <begin position="687"/>
        <end position="694"/>
    </location>
</feature>
<feature type="strand" evidence="28">
    <location>
        <begin position="698"/>
        <end position="702"/>
    </location>
</feature>
<feature type="strand" evidence="28">
    <location>
        <begin position="708"/>
        <end position="710"/>
    </location>
</feature>
<feature type="helix" evidence="28">
    <location>
        <begin position="712"/>
        <end position="715"/>
    </location>
</feature>
<feature type="helix" evidence="28">
    <location>
        <begin position="716"/>
        <end position="718"/>
    </location>
</feature>
<feature type="turn" evidence="28">
    <location>
        <begin position="722"/>
        <end position="724"/>
    </location>
</feature>
<feature type="helix" evidence="28">
    <location>
        <begin position="726"/>
        <end position="740"/>
    </location>
</feature>
<feature type="strand" evidence="28">
    <location>
        <begin position="744"/>
        <end position="754"/>
    </location>
</feature>
<feature type="helix" evidence="28">
    <location>
        <begin position="756"/>
        <end position="767"/>
    </location>
</feature>
<feature type="turn" evidence="28">
    <location>
        <begin position="769"/>
        <end position="771"/>
    </location>
</feature>
<feature type="strand" evidence="28">
    <location>
        <begin position="772"/>
        <end position="779"/>
    </location>
</feature>
<feature type="helix" evidence="28">
    <location>
        <begin position="784"/>
        <end position="786"/>
    </location>
</feature>
<feature type="helix" evidence="28">
    <location>
        <begin position="789"/>
        <end position="796"/>
    </location>
</feature>
<feature type="helix" evidence="28">
    <location>
        <begin position="799"/>
        <end position="801"/>
    </location>
</feature>
<feature type="helix" evidence="28">
    <location>
        <begin position="803"/>
        <end position="808"/>
    </location>
</feature>
<feature type="helix" evidence="28">
    <location>
        <begin position="811"/>
        <end position="817"/>
    </location>
</feature>
<feature type="strand" evidence="28">
    <location>
        <begin position="820"/>
        <end position="830"/>
    </location>
</feature>
<feature type="turn" evidence="28">
    <location>
        <begin position="834"/>
        <end position="838"/>
    </location>
</feature>
<feature type="helix" evidence="28">
    <location>
        <begin position="839"/>
        <end position="850"/>
    </location>
</feature>
<feature type="strand" evidence="28">
    <location>
        <begin position="856"/>
        <end position="860"/>
    </location>
</feature>
<feature type="strand" evidence="28">
    <location>
        <begin position="864"/>
        <end position="866"/>
    </location>
</feature>
<feature type="helix" evidence="28">
    <location>
        <begin position="870"/>
        <end position="887"/>
    </location>
</feature>
<feature type="helix" evidence="28">
    <location>
        <begin position="891"/>
        <end position="895"/>
    </location>
</feature>
<name>DPP8_HUMAN</name>